<name>NSP2_ROTBN</name>
<organismHost>
    <name type="scientific">Bos taurus</name>
    <name type="common">Bovine</name>
    <dbReference type="NCBI Taxonomy" id="9913"/>
</organismHost>
<comment type="function">
    <text evidence="1">Participates in replication and packaging of the viral genome. Plays a crucial role, together with NSP5, in the formation of virus factories (viroplasms), which are large inclusions in the host cytoplasm where replication intermediates are assembled and viral RNA replication takes place. Displays ssRNA binding, NTPase, RNA triphosphatase (RTPase) and ATP-independent helix-unwinding activities. The unwinding activity may prepare and organize plus-strand RNAs for packaging and replication by removing interfering secondary structures. The RTPase activity plays a role in the removal of the gamma-phosphate from the rotavirus RNA minus strands of dsRNA genome segments. Participates in the selective exclusion of host proteins from stress granules (SG) and P bodies (PB). Also participates in the sequestration of these remodeled organelles in viral factories.</text>
</comment>
<comment type="cofactor">
    <cofactor evidence="1">
        <name>Mg(2+)</name>
        <dbReference type="ChEBI" id="CHEBI:18420"/>
    </cofactor>
</comment>
<comment type="subunit">
    <text evidence="1">Homooctamer. Interacts with VP1; this interaction is weak. Interacts with NSP5; this interaction leads to up-regulation of NSP5 phosphorylation and formation of viral factories. Interacts with host DCP1A, DCP1B, DDX6, EDC4 and EIF2S1/eIF2-alpha; these interactions are probably part of the sequestration of some host SGs and PBs proteins in viral factories.</text>
</comment>
<comment type="subcellular location">
    <subcellularLocation>
        <location evidence="1">Host cytoplasm</location>
    </subcellularLocation>
    <text evidence="1">Found in spherical cytoplasmic structures, called viral factories, that appear early after infection and are the site of viral replication and packaging.</text>
</comment>
<comment type="similarity">
    <text evidence="1">Belongs to the rotavirus NSP2 family.</text>
</comment>
<proteinExistence type="inferred from homology"/>
<accession>Q03241</accession>
<keyword id="KW-0067">ATP-binding</keyword>
<keyword id="KW-1035">Host cytoplasm</keyword>
<keyword id="KW-0378">Hydrolase</keyword>
<keyword id="KW-0460">Magnesium</keyword>
<keyword id="KW-0479">Metal-binding</keyword>
<keyword id="KW-0547">Nucleotide-binding</keyword>
<keyword id="KW-0694">RNA-binding</keyword>
<organism>
    <name type="scientific">Rotavirus A (strain RVA/Cow/United States/NCDV-Lincoln/1969/G6P6[1])</name>
    <name type="common">RV-A</name>
    <name type="synonym">Rotavirus A (strain Nebraska calf diarrhea virus)</name>
    <dbReference type="NCBI Taxonomy" id="36439"/>
    <lineage>
        <taxon>Viruses</taxon>
        <taxon>Riboviria</taxon>
        <taxon>Orthornavirae</taxon>
        <taxon>Duplornaviricota</taxon>
        <taxon>Resentoviricetes</taxon>
        <taxon>Reovirales</taxon>
        <taxon>Sedoreoviridae</taxon>
        <taxon>Rotavirus</taxon>
        <taxon>Rotavirus A</taxon>
    </lineage>
</organism>
<dbReference type="EC" id="3.6.4.-" evidence="1"/>
<dbReference type="EMBL" id="L04530">
    <property type="protein sequence ID" value="AAA47297.1"/>
    <property type="molecule type" value="Genomic_RNA"/>
</dbReference>
<dbReference type="SMR" id="Q03241"/>
<dbReference type="GO" id="GO:0030430">
    <property type="term" value="C:host cell cytoplasm"/>
    <property type="evidence" value="ECO:0007669"/>
    <property type="project" value="UniProtKB-SubCell"/>
</dbReference>
<dbReference type="GO" id="GO:0005524">
    <property type="term" value="F:ATP binding"/>
    <property type="evidence" value="ECO:0007669"/>
    <property type="project" value="UniProtKB-KW"/>
</dbReference>
<dbReference type="GO" id="GO:0046872">
    <property type="term" value="F:metal ion binding"/>
    <property type="evidence" value="ECO:0007669"/>
    <property type="project" value="UniProtKB-UniRule"/>
</dbReference>
<dbReference type="GO" id="GO:0004550">
    <property type="term" value="F:nucleoside diphosphate kinase activity"/>
    <property type="evidence" value="ECO:0007669"/>
    <property type="project" value="InterPro"/>
</dbReference>
<dbReference type="GO" id="GO:0017111">
    <property type="term" value="F:ribonucleoside triphosphate phosphatase activity"/>
    <property type="evidence" value="ECO:0007669"/>
    <property type="project" value="InterPro"/>
</dbReference>
<dbReference type="GO" id="GO:0003723">
    <property type="term" value="F:RNA binding"/>
    <property type="evidence" value="ECO:0007669"/>
    <property type="project" value="UniProtKB-UniRule"/>
</dbReference>
<dbReference type="GO" id="GO:0019079">
    <property type="term" value="P:viral genome replication"/>
    <property type="evidence" value="ECO:0007669"/>
    <property type="project" value="UniProtKB-UniRule"/>
</dbReference>
<dbReference type="Gene3D" id="3.30.428.20">
    <property type="entry name" value="Rotavirus NSP2 fragment, C-terminal domain"/>
    <property type="match status" value="1"/>
</dbReference>
<dbReference type="Gene3D" id="3.90.1400.10">
    <property type="entry name" value="Rotavirus NSP2 fragment, N-terminal domain"/>
    <property type="match status" value="1"/>
</dbReference>
<dbReference type="HAMAP" id="MF_04089">
    <property type="entry name" value="ROTA_NSP2"/>
    <property type="match status" value="1"/>
</dbReference>
<dbReference type="InterPro" id="IPR048306">
    <property type="entry name" value="Rota_NS35_C"/>
</dbReference>
<dbReference type="InterPro" id="IPR048573">
    <property type="entry name" value="Rota_NS35_N"/>
</dbReference>
<dbReference type="InterPro" id="IPR003668">
    <property type="entry name" value="Rotavirus_NSP2"/>
</dbReference>
<dbReference type="InterPro" id="IPR024076">
    <property type="entry name" value="Rotavirus_NSP2_C"/>
</dbReference>
<dbReference type="InterPro" id="IPR024068">
    <property type="entry name" value="Rotavirus_NSP2_N"/>
</dbReference>
<dbReference type="Pfam" id="PF02509">
    <property type="entry name" value="Rota_NS35_C"/>
    <property type="match status" value="1"/>
</dbReference>
<dbReference type="Pfam" id="PF21067">
    <property type="entry name" value="Rota_NS35_N"/>
    <property type="match status" value="1"/>
</dbReference>
<dbReference type="SUPFAM" id="SSF75347">
    <property type="entry name" value="Rotavirus NSP2 fragment, C-terminal domain"/>
    <property type="match status" value="1"/>
</dbReference>
<dbReference type="SUPFAM" id="SSF75574">
    <property type="entry name" value="Rotavirus NSP2 fragment, N-terminal domain"/>
    <property type="match status" value="1"/>
</dbReference>
<sequence>MAELACFCYPHLENDSYRFIPFNSLAIKCMLTAKVDKKDQDKFYNSIIYGIAPPPQFKKRYNTNDNSRGMNYETPMFNKVAVLICEALNSIKVTQSDVASVLSKVISVRHLENLVLRRENHQDVLFHSKELLLRSVLIAIGHSKEIETTATAEGGEVVFQNAAFTMWKLTYLEHRLMPILDQNFIEYKITVNEDKPISESHVRELIAELRWQYNKFAVITHGKGHYRVVKYSSVANHADRVYATFKSNNKNGNVIEFNLLDQRIIWQNWYAFTSSMKQGNTLEICKKLLFQKMKRESNPFKGLSTDRKMDEVSQIGI</sequence>
<feature type="chain" id="PRO_0000149545" description="Non-structural protein 2">
    <location>
        <begin position="1"/>
        <end position="317"/>
    </location>
</feature>
<feature type="region of interest" description="RNA-binding" evidence="1">
    <location>
        <begin position="205"/>
        <end position="241"/>
    </location>
</feature>
<feature type="active site" description="For NTPase and RTPase activities" evidence="1">
    <location>
        <position position="225"/>
    </location>
</feature>
<feature type="binding site" evidence="1">
    <location>
        <begin position="107"/>
        <end position="109"/>
    </location>
    <ligand>
        <name>ATP</name>
        <dbReference type="ChEBI" id="CHEBI:30616"/>
    </ligand>
</feature>
<feature type="binding site" evidence="1">
    <location>
        <position position="188"/>
    </location>
    <ligand>
        <name>ATP</name>
        <dbReference type="ChEBI" id="CHEBI:30616"/>
    </ligand>
</feature>
<feature type="binding site" evidence="1">
    <location>
        <begin position="221"/>
        <end position="223"/>
    </location>
    <ligand>
        <name>ATP</name>
        <dbReference type="ChEBI" id="CHEBI:30616"/>
    </ligand>
</feature>
<feature type="binding site" evidence="1">
    <location>
        <position position="227"/>
    </location>
    <ligand>
        <name>ATP</name>
        <dbReference type="ChEBI" id="CHEBI:30616"/>
    </ligand>
</feature>
<protein>
    <recommendedName>
        <fullName evidence="1">Non-structural protein 2</fullName>
        <shortName evidence="1">NSP2</shortName>
        <ecNumber evidence="1">3.6.4.-</ecNumber>
    </recommendedName>
    <alternativeName>
        <fullName evidence="1">NCVP3</fullName>
    </alternativeName>
    <alternativeName>
        <fullName evidence="1">Non-structural RNA-binding protein 35</fullName>
        <shortName evidence="1">NS35</shortName>
    </alternativeName>
</protein>
<evidence type="ECO:0000255" key="1">
    <source>
        <dbReference type="HAMAP-Rule" id="MF_04089"/>
    </source>
</evidence>
<reference key="1">
    <citation type="journal article" date="1993" name="Virology">
        <title>Nucleotide and amino acid sequence analysis of the rotavirus nonstructural RNA-binding protein NS35.</title>
        <authorList>
            <person name="Patton J.T."/>
            <person name="Salter-Cid L."/>
            <person name="Kalbach A.N."/>
            <person name="Mansell E.A."/>
            <person name="Kattoura M.D."/>
        </authorList>
    </citation>
    <scope>NUCLEOTIDE SEQUENCE [GENOMIC RNA]</scope>
</reference>